<sequence>MVARHFSFFLALLILYDLIPSNQGVEINPTIIKQVRKLRMRCLNQTGASVDVIDKSVKNRILPTDPEIKCFLYCMFDMFGLIDSQNIMHLEALLEVLPEEIHKTINGLVSSCGTQKGKDGCDTAYETVKCYIAVNGKFIWEEIIVLLG</sequence>
<comment type="function">
    <text evidence="3">Odorant-binding protein required for olfactory behavior and activity of pheromone-sensitive neurons in response to the male-specific pheromone cis-vaccenyl acetate (cVA). Modulates social responsivity differently in males and females, regulating male aggression and female receptivity respectively.</text>
</comment>
<comment type="subcellular location">
    <subcellularLocation>
        <location evidence="3">Secreted</location>
    </subcellularLocation>
    <text evidence="3">Secreted in the lumen of olfactory hairs.</text>
</comment>
<comment type="tissue specificity">
    <text evidence="3 4">Expressed in the antenna, mostly on the anterior surface of the third antennal segment (PubMed:29630598, PubMed:7545907). Expressed in auxiliary cells and the third antennal segment and exported to the sensillar lymph (at protein level) (PubMed:29630598).</text>
</comment>
<comment type="induction">
    <text evidence="3">Expression is inversely regulated in male and female in response to the male-specific pheromone cis-vaccenyl acetate (cVA) and is dependent on the active neurotransmission of cVA-sensitive neurons to second order olfactory neurons.</text>
</comment>
<comment type="disruption phenotype">
    <text evidence="3">RNAi-mediated knockdown in males results in reduction of aggressive display. RNAi-mediated knockdown in females results in a significant reduction in sexual receptivity after exposure to the male-specific pheromone cis-vaccenyl acetate (cVA).</text>
</comment>
<comment type="similarity">
    <text evidence="5">Belongs to the PBP/GOBP family.</text>
</comment>
<evidence type="ECO:0000250" key="1"/>
<evidence type="ECO:0000255" key="2"/>
<evidence type="ECO:0000269" key="3">
    <source>
    </source>
</evidence>
<evidence type="ECO:0000269" key="4">
    <source>
    </source>
</evidence>
<evidence type="ECO:0000305" key="5"/>
<name>OB69A_DROME</name>
<dbReference type="EMBL" id="U05980">
    <property type="protein sequence ID" value="AAC46474.1"/>
    <property type="molecule type" value="mRNA"/>
</dbReference>
<dbReference type="EMBL" id="AE014296">
    <property type="protein sequence ID" value="AAF49925.1"/>
    <property type="molecule type" value="Genomic_DNA"/>
</dbReference>
<dbReference type="RefSeq" id="NP_524039.2">
    <property type="nucleotide sequence ID" value="NM_079315.2"/>
</dbReference>
<dbReference type="SMR" id="P54191"/>
<dbReference type="BioGRID" id="64763">
    <property type="interactions" value="1"/>
</dbReference>
<dbReference type="DIP" id="DIP-18244N"/>
<dbReference type="FunCoup" id="P54191">
    <property type="interactions" value="44"/>
</dbReference>
<dbReference type="STRING" id="7227.FBpp0075687"/>
<dbReference type="PaxDb" id="7227-FBpp0075687"/>
<dbReference type="EnsemblMetazoa" id="FBtr0075955">
    <property type="protein sequence ID" value="FBpp0075687"/>
    <property type="gene ID" value="FBgn0011279"/>
</dbReference>
<dbReference type="GeneID" id="39411"/>
<dbReference type="KEGG" id="dme:Dmel_CG10436"/>
<dbReference type="AGR" id="FB:FBgn0011279"/>
<dbReference type="CTD" id="39411"/>
<dbReference type="FlyBase" id="FBgn0011279">
    <property type="gene designation" value="Obp69a"/>
</dbReference>
<dbReference type="VEuPathDB" id="VectorBase:FBgn0011279"/>
<dbReference type="eggNOG" id="ENOG502S7DV">
    <property type="taxonomic scope" value="Eukaryota"/>
</dbReference>
<dbReference type="HOGENOM" id="CLU_107288_1_2_1"/>
<dbReference type="InParanoid" id="P54191"/>
<dbReference type="OMA" id="DSQNIMH"/>
<dbReference type="OrthoDB" id="5978988at2759"/>
<dbReference type="PhylomeDB" id="P54191"/>
<dbReference type="BioGRID-ORCS" id="39411">
    <property type="hits" value="0 hits in 1 CRISPR screen"/>
</dbReference>
<dbReference type="GenomeRNAi" id="39411"/>
<dbReference type="PRO" id="PR:P54191"/>
<dbReference type="Proteomes" id="UP000000803">
    <property type="component" value="Chromosome 3L"/>
</dbReference>
<dbReference type="Bgee" id="FBgn0011279">
    <property type="expression patterns" value="Expressed in hemocyte (sensu Nematoda and Protostomia) in antenna and 40 other cell types or tissues"/>
</dbReference>
<dbReference type="GO" id="GO:0005576">
    <property type="term" value="C:extracellular region"/>
    <property type="evidence" value="ECO:0000314"/>
    <property type="project" value="UniProtKB"/>
</dbReference>
<dbReference type="GO" id="GO:0005615">
    <property type="term" value="C:extracellular space"/>
    <property type="evidence" value="ECO:0000318"/>
    <property type="project" value="GO_Central"/>
</dbReference>
<dbReference type="GO" id="GO:0005549">
    <property type="term" value="F:odorant binding"/>
    <property type="evidence" value="ECO:0000250"/>
    <property type="project" value="FlyBase"/>
</dbReference>
<dbReference type="GO" id="GO:0008145">
    <property type="term" value="F:phenylalkylamine binding"/>
    <property type="evidence" value="ECO:0000250"/>
    <property type="project" value="FlyBase"/>
</dbReference>
<dbReference type="GO" id="GO:0005550">
    <property type="term" value="F:pheromone binding"/>
    <property type="evidence" value="ECO:0000250"/>
    <property type="project" value="FlyBase"/>
</dbReference>
<dbReference type="GO" id="GO:0007619">
    <property type="term" value="P:courtship behavior"/>
    <property type="evidence" value="ECO:0000315"/>
    <property type="project" value="UniProtKB"/>
</dbReference>
<dbReference type="GO" id="GO:0042048">
    <property type="term" value="P:olfactory behavior"/>
    <property type="evidence" value="ECO:0000315"/>
    <property type="project" value="UniProtKB"/>
</dbReference>
<dbReference type="GO" id="GO:0019236">
    <property type="term" value="P:response to pheromone"/>
    <property type="evidence" value="ECO:0000315"/>
    <property type="project" value="UniProtKB"/>
</dbReference>
<dbReference type="GO" id="GO:0007606">
    <property type="term" value="P:sensory perception of chemical stimulus"/>
    <property type="evidence" value="ECO:0000250"/>
    <property type="project" value="FlyBase"/>
</dbReference>
<dbReference type="GO" id="GO:0007608">
    <property type="term" value="P:sensory perception of smell"/>
    <property type="evidence" value="ECO:0000315"/>
    <property type="project" value="UniProtKB"/>
</dbReference>
<dbReference type="CDD" id="cd23992">
    <property type="entry name" value="PBP_GOBP"/>
    <property type="match status" value="1"/>
</dbReference>
<dbReference type="FunFam" id="1.10.238.20:FF:000001">
    <property type="entry name" value="General odorant-binding protein lush"/>
    <property type="match status" value="1"/>
</dbReference>
<dbReference type="Gene3D" id="1.10.238.20">
    <property type="entry name" value="Pheromone/general odorant binding protein domain"/>
    <property type="match status" value="1"/>
</dbReference>
<dbReference type="InterPro" id="IPR006170">
    <property type="entry name" value="PBP/GOBP"/>
</dbReference>
<dbReference type="InterPro" id="IPR036728">
    <property type="entry name" value="PBP_GOBP_sf"/>
</dbReference>
<dbReference type="PANTHER" id="PTHR11857:SF4">
    <property type="entry name" value="GENERAL ODORANT-BINDING PROTEIN 69A"/>
    <property type="match status" value="1"/>
</dbReference>
<dbReference type="PANTHER" id="PTHR11857">
    <property type="entry name" value="ODORANT BINDING PROTEIN-RELATED"/>
    <property type="match status" value="1"/>
</dbReference>
<dbReference type="Pfam" id="PF01395">
    <property type="entry name" value="PBP_GOBP"/>
    <property type="match status" value="1"/>
</dbReference>
<dbReference type="SMART" id="SM00708">
    <property type="entry name" value="PhBP"/>
    <property type="match status" value="1"/>
</dbReference>
<dbReference type="SUPFAM" id="SSF47565">
    <property type="entry name" value="Insect pheromone/odorant-binding proteins"/>
    <property type="match status" value="1"/>
</dbReference>
<feature type="signal peptide" evidence="2">
    <location>
        <begin position="1"/>
        <end position="23"/>
    </location>
</feature>
<feature type="chain" id="PRO_0000012586" description="General odorant-binding protein 69a">
    <location>
        <begin position="24"/>
        <end position="148"/>
    </location>
</feature>
<feature type="disulfide bond" evidence="1">
    <location>
        <begin position="42"/>
        <end position="74"/>
    </location>
</feature>
<feature type="disulfide bond" evidence="1">
    <location>
        <begin position="70"/>
        <end position="121"/>
    </location>
</feature>
<feature type="disulfide bond" evidence="1">
    <location>
        <begin position="112"/>
        <end position="130"/>
    </location>
</feature>
<feature type="sequence conflict" description="In Ref. 1; AAC46474." evidence="5" ref="1">
    <original>H</original>
    <variation>Y</variation>
    <location>
        <position position="102"/>
    </location>
</feature>
<accession>P54191</accession>
<accession>Q9VTX0</accession>
<gene>
    <name type="primary">Obp69a</name>
    <name type="synonym">Pbprp1</name>
    <name type="ORF">CG10436</name>
</gene>
<protein>
    <recommendedName>
        <fullName>General odorant-binding protein 69a</fullName>
    </recommendedName>
    <alternativeName>
        <fullName>Odorant-binding protein 69a</fullName>
    </alternativeName>
    <alternativeName>
        <fullName>Pheromone-binding protein-related protein 1</fullName>
        <shortName>PBPRP-1</shortName>
    </alternativeName>
</protein>
<organism>
    <name type="scientific">Drosophila melanogaster</name>
    <name type="common">Fruit fly</name>
    <dbReference type="NCBI Taxonomy" id="7227"/>
    <lineage>
        <taxon>Eukaryota</taxon>
        <taxon>Metazoa</taxon>
        <taxon>Ecdysozoa</taxon>
        <taxon>Arthropoda</taxon>
        <taxon>Hexapoda</taxon>
        <taxon>Insecta</taxon>
        <taxon>Pterygota</taxon>
        <taxon>Neoptera</taxon>
        <taxon>Endopterygota</taxon>
        <taxon>Diptera</taxon>
        <taxon>Brachycera</taxon>
        <taxon>Muscomorpha</taxon>
        <taxon>Ephydroidea</taxon>
        <taxon>Drosophilidae</taxon>
        <taxon>Drosophila</taxon>
        <taxon>Sophophora</taxon>
    </lineage>
</organism>
<reference key="1">
    <citation type="journal article" date="1994" name="Neuron">
        <title>Members of a family of Drosophila putative odorant-binding proteins are expressed in different subsets of olfactory hairs.</title>
        <authorList>
            <person name="Pikielny C.W."/>
            <person name="Hasan G."/>
            <person name="Rouyer F."/>
            <person name="Rosbash M."/>
        </authorList>
    </citation>
    <scope>NUCLEOTIDE SEQUENCE [MRNA]</scope>
    <scope>TISSUE SPECIFICITY</scope>
    <source>
        <strain>Canton-S</strain>
        <tissue>Antenna</tissue>
    </source>
</reference>
<reference key="2">
    <citation type="journal article" date="2000" name="Science">
        <title>The genome sequence of Drosophila melanogaster.</title>
        <authorList>
            <person name="Adams M.D."/>
            <person name="Celniker S.E."/>
            <person name="Holt R.A."/>
            <person name="Evans C.A."/>
            <person name="Gocayne J.D."/>
            <person name="Amanatides P.G."/>
            <person name="Scherer S.E."/>
            <person name="Li P.W."/>
            <person name="Hoskins R.A."/>
            <person name="Galle R.F."/>
            <person name="George R.A."/>
            <person name="Lewis S.E."/>
            <person name="Richards S."/>
            <person name="Ashburner M."/>
            <person name="Henderson S.N."/>
            <person name="Sutton G.G."/>
            <person name="Wortman J.R."/>
            <person name="Yandell M.D."/>
            <person name="Zhang Q."/>
            <person name="Chen L.X."/>
            <person name="Brandon R.C."/>
            <person name="Rogers Y.-H.C."/>
            <person name="Blazej R.G."/>
            <person name="Champe M."/>
            <person name="Pfeiffer B.D."/>
            <person name="Wan K.H."/>
            <person name="Doyle C."/>
            <person name="Baxter E.G."/>
            <person name="Helt G."/>
            <person name="Nelson C.R."/>
            <person name="Miklos G.L.G."/>
            <person name="Abril J.F."/>
            <person name="Agbayani A."/>
            <person name="An H.-J."/>
            <person name="Andrews-Pfannkoch C."/>
            <person name="Baldwin D."/>
            <person name="Ballew R.M."/>
            <person name="Basu A."/>
            <person name="Baxendale J."/>
            <person name="Bayraktaroglu L."/>
            <person name="Beasley E.M."/>
            <person name="Beeson K.Y."/>
            <person name="Benos P.V."/>
            <person name="Berman B.P."/>
            <person name="Bhandari D."/>
            <person name="Bolshakov S."/>
            <person name="Borkova D."/>
            <person name="Botchan M.R."/>
            <person name="Bouck J."/>
            <person name="Brokstein P."/>
            <person name="Brottier P."/>
            <person name="Burtis K.C."/>
            <person name="Busam D.A."/>
            <person name="Butler H."/>
            <person name="Cadieu E."/>
            <person name="Center A."/>
            <person name="Chandra I."/>
            <person name="Cherry J.M."/>
            <person name="Cawley S."/>
            <person name="Dahlke C."/>
            <person name="Davenport L.B."/>
            <person name="Davies P."/>
            <person name="de Pablos B."/>
            <person name="Delcher A."/>
            <person name="Deng Z."/>
            <person name="Mays A.D."/>
            <person name="Dew I."/>
            <person name="Dietz S.M."/>
            <person name="Dodson K."/>
            <person name="Doup L.E."/>
            <person name="Downes M."/>
            <person name="Dugan-Rocha S."/>
            <person name="Dunkov B.C."/>
            <person name="Dunn P."/>
            <person name="Durbin K.J."/>
            <person name="Evangelista C.C."/>
            <person name="Ferraz C."/>
            <person name="Ferriera S."/>
            <person name="Fleischmann W."/>
            <person name="Fosler C."/>
            <person name="Gabrielian A.E."/>
            <person name="Garg N.S."/>
            <person name="Gelbart W.M."/>
            <person name="Glasser K."/>
            <person name="Glodek A."/>
            <person name="Gong F."/>
            <person name="Gorrell J.H."/>
            <person name="Gu Z."/>
            <person name="Guan P."/>
            <person name="Harris M."/>
            <person name="Harris N.L."/>
            <person name="Harvey D.A."/>
            <person name="Heiman T.J."/>
            <person name="Hernandez J.R."/>
            <person name="Houck J."/>
            <person name="Hostin D."/>
            <person name="Houston K.A."/>
            <person name="Howland T.J."/>
            <person name="Wei M.-H."/>
            <person name="Ibegwam C."/>
            <person name="Jalali M."/>
            <person name="Kalush F."/>
            <person name="Karpen G.H."/>
            <person name="Ke Z."/>
            <person name="Kennison J.A."/>
            <person name="Ketchum K.A."/>
            <person name="Kimmel B.E."/>
            <person name="Kodira C.D."/>
            <person name="Kraft C.L."/>
            <person name="Kravitz S."/>
            <person name="Kulp D."/>
            <person name="Lai Z."/>
            <person name="Lasko P."/>
            <person name="Lei Y."/>
            <person name="Levitsky A.A."/>
            <person name="Li J.H."/>
            <person name="Li Z."/>
            <person name="Liang Y."/>
            <person name="Lin X."/>
            <person name="Liu X."/>
            <person name="Mattei B."/>
            <person name="McIntosh T.C."/>
            <person name="McLeod M.P."/>
            <person name="McPherson D."/>
            <person name="Merkulov G."/>
            <person name="Milshina N.V."/>
            <person name="Mobarry C."/>
            <person name="Morris J."/>
            <person name="Moshrefi A."/>
            <person name="Mount S.M."/>
            <person name="Moy M."/>
            <person name="Murphy B."/>
            <person name="Murphy L."/>
            <person name="Muzny D.M."/>
            <person name="Nelson D.L."/>
            <person name="Nelson D.R."/>
            <person name="Nelson K.A."/>
            <person name="Nixon K."/>
            <person name="Nusskern D.R."/>
            <person name="Pacleb J.M."/>
            <person name="Palazzolo M."/>
            <person name="Pittman G.S."/>
            <person name="Pan S."/>
            <person name="Pollard J."/>
            <person name="Puri V."/>
            <person name="Reese M.G."/>
            <person name="Reinert K."/>
            <person name="Remington K."/>
            <person name="Saunders R.D.C."/>
            <person name="Scheeler F."/>
            <person name="Shen H."/>
            <person name="Shue B.C."/>
            <person name="Siden-Kiamos I."/>
            <person name="Simpson M."/>
            <person name="Skupski M.P."/>
            <person name="Smith T.J."/>
            <person name="Spier E."/>
            <person name="Spradling A.C."/>
            <person name="Stapleton M."/>
            <person name="Strong R."/>
            <person name="Sun E."/>
            <person name="Svirskas R."/>
            <person name="Tector C."/>
            <person name="Turner R."/>
            <person name="Venter E."/>
            <person name="Wang A.H."/>
            <person name="Wang X."/>
            <person name="Wang Z.-Y."/>
            <person name="Wassarman D.A."/>
            <person name="Weinstock G.M."/>
            <person name="Weissenbach J."/>
            <person name="Williams S.M."/>
            <person name="Woodage T."/>
            <person name="Worley K.C."/>
            <person name="Wu D."/>
            <person name="Yang S."/>
            <person name="Yao Q.A."/>
            <person name="Ye J."/>
            <person name="Yeh R.-F."/>
            <person name="Zaveri J.S."/>
            <person name="Zhan M."/>
            <person name="Zhang G."/>
            <person name="Zhao Q."/>
            <person name="Zheng L."/>
            <person name="Zheng X.H."/>
            <person name="Zhong F.N."/>
            <person name="Zhong W."/>
            <person name="Zhou X."/>
            <person name="Zhu S.C."/>
            <person name="Zhu X."/>
            <person name="Smith H.O."/>
            <person name="Gibbs R.A."/>
            <person name="Myers E.W."/>
            <person name="Rubin G.M."/>
            <person name="Venter J.C."/>
        </authorList>
    </citation>
    <scope>NUCLEOTIDE SEQUENCE [LARGE SCALE GENOMIC DNA]</scope>
    <source>
        <strain>Berkeley</strain>
    </source>
</reference>
<reference key="3">
    <citation type="journal article" date="2002" name="Genome Biol.">
        <title>Annotation of the Drosophila melanogaster euchromatic genome: a systematic review.</title>
        <authorList>
            <person name="Misra S."/>
            <person name="Crosby M.A."/>
            <person name="Mungall C.J."/>
            <person name="Matthews B.B."/>
            <person name="Campbell K.S."/>
            <person name="Hradecky P."/>
            <person name="Huang Y."/>
            <person name="Kaminker J.S."/>
            <person name="Millburn G.H."/>
            <person name="Prochnik S.E."/>
            <person name="Smith C.D."/>
            <person name="Tupy J.L."/>
            <person name="Whitfield E.J."/>
            <person name="Bayraktaroglu L."/>
            <person name="Berman B.P."/>
            <person name="Bettencourt B.R."/>
            <person name="Celniker S.E."/>
            <person name="de Grey A.D.N.J."/>
            <person name="Drysdale R.A."/>
            <person name="Harris N.L."/>
            <person name="Richter J."/>
            <person name="Russo S."/>
            <person name="Schroeder A.J."/>
            <person name="Shu S.Q."/>
            <person name="Stapleton M."/>
            <person name="Yamada C."/>
            <person name="Ashburner M."/>
            <person name="Gelbart W.M."/>
            <person name="Rubin G.M."/>
            <person name="Lewis S.E."/>
        </authorList>
    </citation>
    <scope>GENOME REANNOTATION</scope>
    <source>
        <strain>Berkeley</strain>
    </source>
</reference>
<reference key="4">
    <citation type="journal article" date="2018" name="PLoS Genet.">
        <title>Odorant binding protein 69a connects social interaction to modulation of social responsiveness in Drosophila.</title>
        <authorList>
            <person name="Bentzur A."/>
            <person name="Shmueli A."/>
            <person name="Omesi L."/>
            <person name="Ryvkin J."/>
            <person name="Knapp J.M."/>
            <person name="Parnas M."/>
            <person name="Davis F.P."/>
            <person name="Shohat-Ophir G."/>
        </authorList>
    </citation>
    <scope>FUNCTION</scope>
    <scope>SUBCELLULAR LOCATION</scope>
    <scope>TISSUE SPECIFICITY</scope>
    <scope>INDUCTION BY CIS-VACCENYL ACETATE</scope>
    <scope>DISRUPTION PHENOTYPE</scope>
</reference>
<proteinExistence type="evidence at protein level"/>
<keyword id="KW-1015">Disulfide bond</keyword>
<keyword id="KW-1185">Reference proteome</keyword>
<keyword id="KW-0964">Secreted</keyword>
<keyword id="KW-0732">Signal</keyword>